<proteinExistence type="inferred from homology"/>
<keyword id="KW-0067">ATP-binding</keyword>
<keyword id="KW-0460">Magnesium</keyword>
<keyword id="KW-0547">Nucleotide-binding</keyword>
<keyword id="KW-1185">Reference proteome</keyword>
<keyword id="KW-0808">Transferase</keyword>
<keyword id="KW-0819">tRNA processing</keyword>
<comment type="function">
    <text evidence="1">Catalyzes the transfer of a dimethylallyl group onto the adenine at position 37 in tRNAs that read codons beginning with uridine, leading to the formation of N6-(dimethylallyl)adenosine (i(6)A).</text>
</comment>
<comment type="catalytic activity">
    <reaction evidence="1">
        <text>adenosine(37) in tRNA + dimethylallyl diphosphate = N(6)-dimethylallyladenosine(37) in tRNA + diphosphate</text>
        <dbReference type="Rhea" id="RHEA:26482"/>
        <dbReference type="Rhea" id="RHEA-COMP:10162"/>
        <dbReference type="Rhea" id="RHEA-COMP:10375"/>
        <dbReference type="ChEBI" id="CHEBI:33019"/>
        <dbReference type="ChEBI" id="CHEBI:57623"/>
        <dbReference type="ChEBI" id="CHEBI:74411"/>
        <dbReference type="ChEBI" id="CHEBI:74415"/>
        <dbReference type="EC" id="2.5.1.75"/>
    </reaction>
</comment>
<comment type="cofactor">
    <cofactor evidence="1">
        <name>Mg(2+)</name>
        <dbReference type="ChEBI" id="CHEBI:18420"/>
    </cofactor>
</comment>
<comment type="subunit">
    <text evidence="1">Monomer.</text>
</comment>
<comment type="similarity">
    <text evidence="1">Belongs to the IPP transferase family.</text>
</comment>
<evidence type="ECO:0000255" key="1">
    <source>
        <dbReference type="HAMAP-Rule" id="MF_00185"/>
    </source>
</evidence>
<sequence>MEPRIWLIAGPTASGKSALALRLAEASGAEIVNADSMQLYAGLRVLTAGPGPEETARAPHHLFGSVDPADGWSVGRWLRAASEVIADIRGRGRPVVVVGGTGLYFRALTQGLAEIPEVPADVRAKAAADFERMGEAAFRTRLAEVDPAAAARIAPGDRQRLCRAWEVFAATGQALSDLQRTGAPAIADWSAVALEPPRPALYARCDARLHAMVREGALEEVRALIARNLDPALPAMKAVGVREFAAHLRGETSLEAAVEAAQQETRRYAKRQITWMRGQMAGWPRLTADDHEGQWRQFLAQEPGLTP</sequence>
<name>MIAA_PHEZH</name>
<reference key="1">
    <citation type="journal article" date="2008" name="BMC Genomics">
        <title>Complete genome of Phenylobacterium zucineum - a novel facultative intracellular bacterium isolated from human erythroleukemia cell line K562.</title>
        <authorList>
            <person name="Luo Y."/>
            <person name="Xu X."/>
            <person name="Ding Z."/>
            <person name="Liu Z."/>
            <person name="Zhang B."/>
            <person name="Yan Z."/>
            <person name="Sun J."/>
            <person name="Hu S."/>
            <person name="Hu X."/>
        </authorList>
    </citation>
    <scope>NUCLEOTIDE SEQUENCE [LARGE SCALE GENOMIC DNA]</scope>
    <source>
        <strain>HLK1</strain>
    </source>
</reference>
<gene>
    <name evidence="1" type="primary">miaA</name>
    <name type="ordered locus">PHZ_c0874</name>
</gene>
<dbReference type="EC" id="2.5.1.75" evidence="1"/>
<dbReference type="EMBL" id="CP000747">
    <property type="protein sequence ID" value="ACG77288.1"/>
    <property type="molecule type" value="Genomic_DNA"/>
</dbReference>
<dbReference type="RefSeq" id="WP_012521436.1">
    <property type="nucleotide sequence ID" value="NC_011144.1"/>
</dbReference>
<dbReference type="SMR" id="B4RGS2"/>
<dbReference type="STRING" id="450851.PHZ_c0874"/>
<dbReference type="KEGG" id="pzu:PHZ_c0874"/>
<dbReference type="eggNOG" id="COG0324">
    <property type="taxonomic scope" value="Bacteria"/>
</dbReference>
<dbReference type="HOGENOM" id="CLU_032616_0_1_5"/>
<dbReference type="OrthoDB" id="9776390at2"/>
<dbReference type="Proteomes" id="UP000001868">
    <property type="component" value="Chromosome"/>
</dbReference>
<dbReference type="GO" id="GO:0005524">
    <property type="term" value="F:ATP binding"/>
    <property type="evidence" value="ECO:0007669"/>
    <property type="project" value="UniProtKB-UniRule"/>
</dbReference>
<dbReference type="GO" id="GO:0052381">
    <property type="term" value="F:tRNA dimethylallyltransferase activity"/>
    <property type="evidence" value="ECO:0007669"/>
    <property type="project" value="UniProtKB-UniRule"/>
</dbReference>
<dbReference type="GO" id="GO:0006400">
    <property type="term" value="P:tRNA modification"/>
    <property type="evidence" value="ECO:0007669"/>
    <property type="project" value="TreeGrafter"/>
</dbReference>
<dbReference type="Gene3D" id="1.10.20.140">
    <property type="match status" value="1"/>
</dbReference>
<dbReference type="Gene3D" id="3.40.50.300">
    <property type="entry name" value="P-loop containing nucleotide triphosphate hydrolases"/>
    <property type="match status" value="1"/>
</dbReference>
<dbReference type="HAMAP" id="MF_00185">
    <property type="entry name" value="IPP_trans"/>
    <property type="match status" value="1"/>
</dbReference>
<dbReference type="InterPro" id="IPR039657">
    <property type="entry name" value="Dimethylallyltransferase"/>
</dbReference>
<dbReference type="InterPro" id="IPR018022">
    <property type="entry name" value="IPT"/>
</dbReference>
<dbReference type="InterPro" id="IPR027417">
    <property type="entry name" value="P-loop_NTPase"/>
</dbReference>
<dbReference type="NCBIfam" id="TIGR00174">
    <property type="entry name" value="miaA"/>
    <property type="match status" value="1"/>
</dbReference>
<dbReference type="PANTHER" id="PTHR11088">
    <property type="entry name" value="TRNA DIMETHYLALLYLTRANSFERASE"/>
    <property type="match status" value="1"/>
</dbReference>
<dbReference type="PANTHER" id="PTHR11088:SF60">
    <property type="entry name" value="TRNA DIMETHYLALLYLTRANSFERASE"/>
    <property type="match status" value="1"/>
</dbReference>
<dbReference type="Pfam" id="PF01715">
    <property type="entry name" value="IPPT"/>
    <property type="match status" value="1"/>
</dbReference>
<dbReference type="SUPFAM" id="SSF52540">
    <property type="entry name" value="P-loop containing nucleoside triphosphate hydrolases"/>
    <property type="match status" value="2"/>
</dbReference>
<feature type="chain" id="PRO_0000377261" description="tRNA dimethylallyltransferase">
    <location>
        <begin position="1"/>
        <end position="307"/>
    </location>
</feature>
<feature type="region of interest" description="Interaction with substrate tRNA" evidence="1">
    <location>
        <begin position="35"/>
        <end position="38"/>
    </location>
</feature>
<feature type="region of interest" description="Interaction with substrate tRNA" evidence="1">
    <location>
        <begin position="159"/>
        <end position="163"/>
    </location>
</feature>
<feature type="binding site" evidence="1">
    <location>
        <begin position="10"/>
        <end position="17"/>
    </location>
    <ligand>
        <name>ATP</name>
        <dbReference type="ChEBI" id="CHEBI:30616"/>
    </ligand>
</feature>
<feature type="binding site" evidence="1">
    <location>
        <begin position="12"/>
        <end position="17"/>
    </location>
    <ligand>
        <name>substrate</name>
    </ligand>
</feature>
<feature type="site" description="Interaction with substrate tRNA" evidence="1">
    <location>
        <position position="101"/>
    </location>
</feature>
<feature type="site" description="Interaction with substrate tRNA" evidence="1">
    <location>
        <position position="123"/>
    </location>
</feature>
<accession>B4RGS2</accession>
<protein>
    <recommendedName>
        <fullName evidence="1">tRNA dimethylallyltransferase</fullName>
        <ecNumber evidence="1">2.5.1.75</ecNumber>
    </recommendedName>
    <alternativeName>
        <fullName evidence="1">Dimethylallyl diphosphate:tRNA dimethylallyltransferase</fullName>
        <shortName evidence="1">DMAPP:tRNA dimethylallyltransferase</shortName>
        <shortName evidence="1">DMATase</shortName>
    </alternativeName>
    <alternativeName>
        <fullName evidence="1">Isopentenyl-diphosphate:tRNA isopentenyltransferase</fullName>
        <shortName evidence="1">IPP transferase</shortName>
        <shortName evidence="1">IPPT</shortName>
        <shortName evidence="1">IPTase</shortName>
    </alternativeName>
</protein>
<organism>
    <name type="scientific">Phenylobacterium zucineum (strain HLK1)</name>
    <dbReference type="NCBI Taxonomy" id="450851"/>
    <lineage>
        <taxon>Bacteria</taxon>
        <taxon>Pseudomonadati</taxon>
        <taxon>Pseudomonadota</taxon>
        <taxon>Alphaproteobacteria</taxon>
        <taxon>Caulobacterales</taxon>
        <taxon>Caulobacteraceae</taxon>
        <taxon>Phenylobacterium</taxon>
    </lineage>
</organism>